<protein>
    <recommendedName>
        <fullName evidence="1">Transmembrane protein 276</fullName>
    </recommendedName>
</protein>
<keyword id="KW-0472">Membrane</keyword>
<keyword id="KW-1185">Reference proteome</keyword>
<keyword id="KW-0732">Signal</keyword>
<keyword id="KW-0812">Transmembrane</keyword>
<keyword id="KW-1133">Transmembrane helix</keyword>
<reference key="1">
    <citation type="journal article" date="2009" name="Science">
        <title>The genome sequence of taurine cattle: a window to ruminant biology and evolution.</title>
        <authorList>
            <consortium name="The bovine genome sequencing and analysis consortium"/>
        </authorList>
    </citation>
    <scope>NUCLEOTIDE SEQUENCE [LARGE SCALE GENOMIC DNA]</scope>
    <source>
        <strain>Hereford</strain>
    </source>
</reference>
<reference key="2">
    <citation type="submission" date="2005-09" db="EMBL/GenBank/DDBJ databases">
        <authorList>
            <consortium name="NIH - Mammalian Gene Collection (MGC) project"/>
        </authorList>
    </citation>
    <scope>NUCLEOTIDE SEQUENCE [LARGE SCALE MRNA]</scope>
    <source>
        <strain>Hereford</strain>
        <tissue>Uterus</tissue>
    </source>
</reference>
<evidence type="ECO:0000250" key="1">
    <source>
        <dbReference type="UniProtKB" id="P0DTL5"/>
    </source>
</evidence>
<evidence type="ECO:0000255" key="2"/>
<dbReference type="EMBL" id="NKLS02000014">
    <property type="status" value="NOT_ANNOTATED_CDS"/>
    <property type="molecule type" value="Genomic_DNA"/>
</dbReference>
<dbReference type="EMBL" id="BC104552">
    <property type="protein sequence ID" value="AAI04553.1"/>
    <property type="molecule type" value="mRNA"/>
</dbReference>
<dbReference type="RefSeq" id="NP_001309753.1">
    <property type="nucleotide sequence ID" value="NM_001322824.1"/>
</dbReference>
<dbReference type="GeneID" id="125505914"/>
<dbReference type="KEGG" id="bta:125505914"/>
<dbReference type="CTD" id="84773"/>
<dbReference type="Proteomes" id="UP000009136">
    <property type="component" value="Chromosome 14"/>
</dbReference>
<dbReference type="GO" id="GO:0016020">
    <property type="term" value="C:membrane"/>
    <property type="evidence" value="ECO:0007669"/>
    <property type="project" value="UniProtKB-SubCell"/>
</dbReference>
<sequence length="193" mass="19989">MTPRPGGEWSSALSHLALGAVSLHAALSTAQANRGAAAGFLLQALATATMLASGLGTDEDCLAGAWVATVIGLPLLAFDFHWVNGDCSSANLLLGGGMVLAVAGDHLGAEGRSVAGQAVVLVVAVTILIVAVFTTNSYGMWGGVMLGAAGLLSRLEEDRLMLLLPKEDICRWALAGGSWAYHRALHTQRLQWE</sequence>
<comment type="subcellular location">
    <subcellularLocation>
        <location evidence="2">Membrane</location>
        <topology evidence="2">Multi-pass membrane protein</topology>
    </subcellularLocation>
</comment>
<name>TM276_BOVIN</name>
<proteinExistence type="evidence at transcript level"/>
<feature type="signal peptide" evidence="2">
    <location>
        <begin position="1"/>
        <end position="32"/>
    </location>
</feature>
<feature type="chain" id="PRO_0000456483" description="Transmembrane protein 276" evidence="2">
    <location>
        <begin position="33"/>
        <end position="193"/>
    </location>
</feature>
<feature type="transmembrane region" description="Helical" evidence="2">
    <location>
        <begin position="35"/>
        <end position="55"/>
    </location>
</feature>
<feature type="transmembrane region" description="Helical" evidence="2">
    <location>
        <begin position="63"/>
        <end position="83"/>
    </location>
</feature>
<feature type="transmembrane region" description="Helical" evidence="2">
    <location>
        <begin position="89"/>
        <end position="109"/>
    </location>
</feature>
<feature type="transmembrane region" description="Helical" evidence="2">
    <location>
        <begin position="114"/>
        <end position="134"/>
    </location>
</feature>
<gene>
    <name evidence="1" type="primary">TMEM276</name>
</gene>
<accession>P0DW90</accession>
<accession>Q3SX19</accession>
<accession>Q7YR89</accession>
<accession>Q7YR91</accession>
<accession>Q7YRA6</accession>
<accession>Q8MK42</accession>
<organism>
    <name type="scientific">Bos taurus</name>
    <name type="common">Bovine</name>
    <dbReference type="NCBI Taxonomy" id="9913"/>
    <lineage>
        <taxon>Eukaryota</taxon>
        <taxon>Metazoa</taxon>
        <taxon>Chordata</taxon>
        <taxon>Craniata</taxon>
        <taxon>Vertebrata</taxon>
        <taxon>Euteleostomi</taxon>
        <taxon>Mammalia</taxon>
        <taxon>Eutheria</taxon>
        <taxon>Laurasiatheria</taxon>
        <taxon>Artiodactyla</taxon>
        <taxon>Ruminantia</taxon>
        <taxon>Pecora</taxon>
        <taxon>Bovidae</taxon>
        <taxon>Bovinae</taxon>
        <taxon>Bos</taxon>
    </lineage>
</organism>